<gene>
    <name evidence="1" type="primary">nsrR</name>
    <name type="ordered locus">ECED1_4963</name>
</gene>
<organism>
    <name type="scientific">Escherichia coli O81 (strain ED1a)</name>
    <dbReference type="NCBI Taxonomy" id="585397"/>
    <lineage>
        <taxon>Bacteria</taxon>
        <taxon>Pseudomonadati</taxon>
        <taxon>Pseudomonadota</taxon>
        <taxon>Gammaproteobacteria</taxon>
        <taxon>Enterobacterales</taxon>
        <taxon>Enterobacteriaceae</taxon>
        <taxon>Escherichia</taxon>
    </lineage>
</organism>
<evidence type="ECO:0000255" key="1">
    <source>
        <dbReference type="HAMAP-Rule" id="MF_01177"/>
    </source>
</evidence>
<sequence length="141" mass="15593">MQLTSFTDYGLRALIYMASLPEGRMTSISEVTDVYGVSRNHMVKIINQLSRAGYVTAVRGKNGGIRLGKPASAIRIGDVVRELEPLSLVNCSSEFCHITPACRLKQALSKAVQSFLTELDNYTLADLVEENQPLYKLLLVE</sequence>
<keyword id="KW-0001">2Fe-2S</keyword>
<keyword id="KW-0238">DNA-binding</keyword>
<keyword id="KW-0408">Iron</keyword>
<keyword id="KW-0411">Iron-sulfur</keyword>
<keyword id="KW-0479">Metal-binding</keyword>
<keyword id="KW-0678">Repressor</keyword>
<keyword id="KW-0804">Transcription</keyword>
<keyword id="KW-0805">Transcription regulation</keyword>
<protein>
    <recommendedName>
        <fullName evidence="1">HTH-type transcriptional repressor NsrR</fullName>
    </recommendedName>
</protein>
<comment type="function">
    <text evidence="1">Nitric oxide-sensitive repressor of genes involved in protecting the cell against nitrosative stress. May require iron for activity.</text>
</comment>
<comment type="cofactor">
    <cofactor evidence="1">
        <name>[2Fe-2S] cluster</name>
        <dbReference type="ChEBI" id="CHEBI:190135"/>
    </cofactor>
    <text evidence="1">Binds 1 [2Fe-2S] cluster per subunit.</text>
</comment>
<dbReference type="EMBL" id="CU928162">
    <property type="protein sequence ID" value="CAR10921.1"/>
    <property type="molecule type" value="Genomic_DNA"/>
</dbReference>
<dbReference type="RefSeq" id="WP_001177639.1">
    <property type="nucleotide sequence ID" value="NC_011745.1"/>
</dbReference>
<dbReference type="SMR" id="B7MSJ6"/>
<dbReference type="GeneID" id="93777643"/>
<dbReference type="KEGG" id="ecq:ECED1_4963"/>
<dbReference type="HOGENOM" id="CLU_107144_2_1_6"/>
<dbReference type="Proteomes" id="UP000000748">
    <property type="component" value="Chromosome"/>
</dbReference>
<dbReference type="GO" id="GO:0005829">
    <property type="term" value="C:cytosol"/>
    <property type="evidence" value="ECO:0007669"/>
    <property type="project" value="TreeGrafter"/>
</dbReference>
<dbReference type="GO" id="GO:0051537">
    <property type="term" value="F:2 iron, 2 sulfur cluster binding"/>
    <property type="evidence" value="ECO:0007669"/>
    <property type="project" value="UniProtKB-KW"/>
</dbReference>
<dbReference type="GO" id="GO:0003700">
    <property type="term" value="F:DNA-binding transcription factor activity"/>
    <property type="evidence" value="ECO:0007669"/>
    <property type="project" value="UniProtKB-UniRule"/>
</dbReference>
<dbReference type="GO" id="GO:0003690">
    <property type="term" value="F:double-stranded DNA binding"/>
    <property type="evidence" value="ECO:0007669"/>
    <property type="project" value="UniProtKB-UniRule"/>
</dbReference>
<dbReference type="GO" id="GO:0005506">
    <property type="term" value="F:iron ion binding"/>
    <property type="evidence" value="ECO:0007669"/>
    <property type="project" value="UniProtKB-UniRule"/>
</dbReference>
<dbReference type="GO" id="GO:0045892">
    <property type="term" value="P:negative regulation of DNA-templated transcription"/>
    <property type="evidence" value="ECO:0007669"/>
    <property type="project" value="InterPro"/>
</dbReference>
<dbReference type="FunFam" id="1.10.10.10:FF:000105">
    <property type="entry name" value="HTH-type transcriptional repressor NsrR"/>
    <property type="match status" value="1"/>
</dbReference>
<dbReference type="Gene3D" id="1.10.10.10">
    <property type="entry name" value="Winged helix-like DNA-binding domain superfamily/Winged helix DNA-binding domain"/>
    <property type="match status" value="1"/>
</dbReference>
<dbReference type="HAMAP" id="MF_01177">
    <property type="entry name" value="HTH_type_NsrR"/>
    <property type="match status" value="1"/>
</dbReference>
<dbReference type="InterPro" id="IPR030489">
    <property type="entry name" value="TR_Rrf2-type_CS"/>
</dbReference>
<dbReference type="InterPro" id="IPR000944">
    <property type="entry name" value="Tscrpt_reg_Rrf2"/>
</dbReference>
<dbReference type="InterPro" id="IPR023761">
    <property type="entry name" value="Tscrpt_rep_HTH_NsrR"/>
</dbReference>
<dbReference type="InterPro" id="IPR036388">
    <property type="entry name" value="WH-like_DNA-bd_sf"/>
</dbReference>
<dbReference type="InterPro" id="IPR036390">
    <property type="entry name" value="WH_DNA-bd_sf"/>
</dbReference>
<dbReference type="NCBIfam" id="NF008240">
    <property type="entry name" value="PRK11014.1"/>
    <property type="match status" value="1"/>
</dbReference>
<dbReference type="NCBIfam" id="TIGR00738">
    <property type="entry name" value="rrf2_super"/>
    <property type="match status" value="1"/>
</dbReference>
<dbReference type="PANTHER" id="PTHR33221:SF4">
    <property type="entry name" value="HTH-TYPE TRANSCRIPTIONAL REPRESSOR NSRR"/>
    <property type="match status" value="1"/>
</dbReference>
<dbReference type="PANTHER" id="PTHR33221">
    <property type="entry name" value="WINGED HELIX-TURN-HELIX TRANSCRIPTIONAL REGULATOR, RRF2 FAMILY"/>
    <property type="match status" value="1"/>
</dbReference>
<dbReference type="Pfam" id="PF02082">
    <property type="entry name" value="Rrf2"/>
    <property type="match status" value="1"/>
</dbReference>
<dbReference type="SUPFAM" id="SSF46785">
    <property type="entry name" value="Winged helix' DNA-binding domain"/>
    <property type="match status" value="1"/>
</dbReference>
<dbReference type="PROSITE" id="PS01332">
    <property type="entry name" value="HTH_RRF2_1"/>
    <property type="match status" value="1"/>
</dbReference>
<dbReference type="PROSITE" id="PS51197">
    <property type="entry name" value="HTH_RRF2_2"/>
    <property type="match status" value="1"/>
</dbReference>
<accession>B7MSJ6</accession>
<reference key="1">
    <citation type="journal article" date="2009" name="PLoS Genet.">
        <title>Organised genome dynamics in the Escherichia coli species results in highly diverse adaptive paths.</title>
        <authorList>
            <person name="Touchon M."/>
            <person name="Hoede C."/>
            <person name="Tenaillon O."/>
            <person name="Barbe V."/>
            <person name="Baeriswyl S."/>
            <person name="Bidet P."/>
            <person name="Bingen E."/>
            <person name="Bonacorsi S."/>
            <person name="Bouchier C."/>
            <person name="Bouvet O."/>
            <person name="Calteau A."/>
            <person name="Chiapello H."/>
            <person name="Clermont O."/>
            <person name="Cruveiller S."/>
            <person name="Danchin A."/>
            <person name="Diard M."/>
            <person name="Dossat C."/>
            <person name="Karoui M.E."/>
            <person name="Frapy E."/>
            <person name="Garry L."/>
            <person name="Ghigo J.M."/>
            <person name="Gilles A.M."/>
            <person name="Johnson J."/>
            <person name="Le Bouguenec C."/>
            <person name="Lescat M."/>
            <person name="Mangenot S."/>
            <person name="Martinez-Jehanne V."/>
            <person name="Matic I."/>
            <person name="Nassif X."/>
            <person name="Oztas S."/>
            <person name="Petit M.A."/>
            <person name="Pichon C."/>
            <person name="Rouy Z."/>
            <person name="Ruf C.S."/>
            <person name="Schneider D."/>
            <person name="Tourret J."/>
            <person name="Vacherie B."/>
            <person name="Vallenet D."/>
            <person name="Medigue C."/>
            <person name="Rocha E.P.C."/>
            <person name="Denamur E."/>
        </authorList>
    </citation>
    <scope>NUCLEOTIDE SEQUENCE [LARGE SCALE GENOMIC DNA]</scope>
    <source>
        <strain>ED1a</strain>
    </source>
</reference>
<feature type="chain" id="PRO_1000164422" description="HTH-type transcriptional repressor NsrR">
    <location>
        <begin position="1"/>
        <end position="141"/>
    </location>
</feature>
<feature type="domain" description="HTH rrf2-type" evidence="1">
    <location>
        <begin position="2"/>
        <end position="129"/>
    </location>
</feature>
<feature type="DNA-binding region" description="H-T-H motif" evidence="1">
    <location>
        <begin position="28"/>
        <end position="51"/>
    </location>
</feature>
<feature type="binding site" evidence="1">
    <location>
        <position position="91"/>
    </location>
    <ligand>
        <name>[2Fe-2S] cluster</name>
        <dbReference type="ChEBI" id="CHEBI:190135"/>
    </ligand>
</feature>
<feature type="binding site" evidence="1">
    <location>
        <position position="96"/>
    </location>
    <ligand>
        <name>[2Fe-2S] cluster</name>
        <dbReference type="ChEBI" id="CHEBI:190135"/>
    </ligand>
</feature>
<feature type="binding site" evidence="1">
    <location>
        <position position="102"/>
    </location>
    <ligand>
        <name>[2Fe-2S] cluster</name>
        <dbReference type="ChEBI" id="CHEBI:190135"/>
    </ligand>
</feature>
<name>NSRR_ECO81</name>
<proteinExistence type="inferred from homology"/>